<evidence type="ECO:0000255" key="1">
    <source>
        <dbReference type="HAMAP-Rule" id="MF_00110"/>
    </source>
</evidence>
<evidence type="ECO:0000305" key="2"/>
<comment type="function">
    <text evidence="1">Catalyzes the conversion of 3-deoxy-D-arabino-heptulosonate 7-phosphate (DAHP) to dehydroquinate (DHQ).</text>
</comment>
<comment type="catalytic activity">
    <reaction evidence="1">
        <text>7-phospho-2-dehydro-3-deoxy-D-arabino-heptonate = 3-dehydroquinate + phosphate</text>
        <dbReference type="Rhea" id="RHEA:21968"/>
        <dbReference type="ChEBI" id="CHEBI:32364"/>
        <dbReference type="ChEBI" id="CHEBI:43474"/>
        <dbReference type="ChEBI" id="CHEBI:58394"/>
        <dbReference type="EC" id="4.2.3.4"/>
    </reaction>
</comment>
<comment type="cofactor">
    <cofactor evidence="1">
        <name>NAD(+)</name>
        <dbReference type="ChEBI" id="CHEBI:57540"/>
    </cofactor>
</comment>
<comment type="cofactor">
    <cofactor evidence="1">
        <name>Co(2+)</name>
        <dbReference type="ChEBI" id="CHEBI:48828"/>
    </cofactor>
    <cofactor evidence="1">
        <name>Zn(2+)</name>
        <dbReference type="ChEBI" id="CHEBI:29105"/>
    </cofactor>
    <text evidence="1">Binds 1 divalent metal cation per subunit. Can use either Co(2+) or Zn(2+).</text>
</comment>
<comment type="pathway">
    <text evidence="1">Metabolic intermediate biosynthesis; chorismate biosynthesis; chorismate from D-erythrose 4-phosphate and phosphoenolpyruvate: step 2/7.</text>
</comment>
<comment type="subcellular location">
    <subcellularLocation>
        <location evidence="1">Cytoplasm</location>
    </subcellularLocation>
</comment>
<comment type="similarity">
    <text evidence="1">Belongs to the sugar phosphate cyclases superfamily. Dehydroquinate synthase family.</text>
</comment>
<accession>Q83PX0</accession>
<accession>Q7UAS3</accession>
<dbReference type="EC" id="4.2.3.4" evidence="1"/>
<dbReference type="EMBL" id="AE005674">
    <property type="protein sequence ID" value="AAN44869.1"/>
    <property type="molecule type" value="Genomic_DNA"/>
</dbReference>
<dbReference type="EMBL" id="AE014073">
    <property type="protein sequence ID" value="AAP19309.1"/>
    <property type="molecule type" value="Genomic_DNA"/>
</dbReference>
<dbReference type="RefSeq" id="NP_709162.1">
    <property type="nucleotide sequence ID" value="NC_004337.2"/>
</dbReference>
<dbReference type="RefSeq" id="WP_000439872.1">
    <property type="nucleotide sequence ID" value="NZ_CP123365.1"/>
</dbReference>
<dbReference type="SMR" id="Q83PX0"/>
<dbReference type="STRING" id="198214.SF3407"/>
<dbReference type="PaxDb" id="198214-SF3407"/>
<dbReference type="GeneID" id="1023505"/>
<dbReference type="KEGG" id="sfl:SF3407"/>
<dbReference type="KEGG" id="sfx:S4355"/>
<dbReference type="PATRIC" id="fig|198214.7.peg.4021"/>
<dbReference type="HOGENOM" id="CLU_001201_0_2_6"/>
<dbReference type="UniPathway" id="UPA00053">
    <property type="reaction ID" value="UER00085"/>
</dbReference>
<dbReference type="Proteomes" id="UP000001006">
    <property type="component" value="Chromosome"/>
</dbReference>
<dbReference type="Proteomes" id="UP000002673">
    <property type="component" value="Chromosome"/>
</dbReference>
<dbReference type="GO" id="GO:0005737">
    <property type="term" value="C:cytoplasm"/>
    <property type="evidence" value="ECO:0007669"/>
    <property type="project" value="UniProtKB-SubCell"/>
</dbReference>
<dbReference type="GO" id="GO:0003856">
    <property type="term" value="F:3-dehydroquinate synthase activity"/>
    <property type="evidence" value="ECO:0007669"/>
    <property type="project" value="UniProtKB-UniRule"/>
</dbReference>
<dbReference type="GO" id="GO:0046872">
    <property type="term" value="F:metal ion binding"/>
    <property type="evidence" value="ECO:0007669"/>
    <property type="project" value="UniProtKB-KW"/>
</dbReference>
<dbReference type="GO" id="GO:0000166">
    <property type="term" value="F:nucleotide binding"/>
    <property type="evidence" value="ECO:0007669"/>
    <property type="project" value="UniProtKB-KW"/>
</dbReference>
<dbReference type="GO" id="GO:0008652">
    <property type="term" value="P:amino acid biosynthetic process"/>
    <property type="evidence" value="ECO:0007669"/>
    <property type="project" value="UniProtKB-KW"/>
</dbReference>
<dbReference type="GO" id="GO:0009073">
    <property type="term" value="P:aromatic amino acid family biosynthetic process"/>
    <property type="evidence" value="ECO:0007669"/>
    <property type="project" value="UniProtKB-KW"/>
</dbReference>
<dbReference type="GO" id="GO:0009423">
    <property type="term" value="P:chorismate biosynthetic process"/>
    <property type="evidence" value="ECO:0007669"/>
    <property type="project" value="UniProtKB-UniRule"/>
</dbReference>
<dbReference type="CDD" id="cd08195">
    <property type="entry name" value="DHQS"/>
    <property type="match status" value="1"/>
</dbReference>
<dbReference type="FunFam" id="1.20.1090.10:FF:000002">
    <property type="entry name" value="3-dehydroquinate synthase"/>
    <property type="match status" value="1"/>
</dbReference>
<dbReference type="FunFam" id="3.40.50.1970:FF:000001">
    <property type="entry name" value="3-dehydroquinate synthase"/>
    <property type="match status" value="1"/>
</dbReference>
<dbReference type="Gene3D" id="3.40.50.1970">
    <property type="match status" value="1"/>
</dbReference>
<dbReference type="Gene3D" id="1.20.1090.10">
    <property type="entry name" value="Dehydroquinate synthase-like - alpha domain"/>
    <property type="match status" value="1"/>
</dbReference>
<dbReference type="HAMAP" id="MF_00110">
    <property type="entry name" value="DHQ_synthase"/>
    <property type="match status" value="1"/>
</dbReference>
<dbReference type="InterPro" id="IPR050071">
    <property type="entry name" value="Dehydroquinate_synthase"/>
</dbReference>
<dbReference type="InterPro" id="IPR016037">
    <property type="entry name" value="DHQ_synth_AroB"/>
</dbReference>
<dbReference type="InterPro" id="IPR030963">
    <property type="entry name" value="DHQ_synth_fam"/>
</dbReference>
<dbReference type="InterPro" id="IPR030960">
    <property type="entry name" value="DHQS/DOIS_N"/>
</dbReference>
<dbReference type="InterPro" id="IPR056179">
    <property type="entry name" value="DHQS_C"/>
</dbReference>
<dbReference type="NCBIfam" id="TIGR01357">
    <property type="entry name" value="aroB"/>
    <property type="match status" value="1"/>
</dbReference>
<dbReference type="PANTHER" id="PTHR43622">
    <property type="entry name" value="3-DEHYDROQUINATE SYNTHASE"/>
    <property type="match status" value="1"/>
</dbReference>
<dbReference type="PANTHER" id="PTHR43622:SF7">
    <property type="entry name" value="3-DEHYDROQUINATE SYNTHASE, CHLOROPLASTIC"/>
    <property type="match status" value="1"/>
</dbReference>
<dbReference type="Pfam" id="PF01761">
    <property type="entry name" value="DHQ_synthase"/>
    <property type="match status" value="1"/>
</dbReference>
<dbReference type="Pfam" id="PF24621">
    <property type="entry name" value="DHQS_C"/>
    <property type="match status" value="1"/>
</dbReference>
<dbReference type="PIRSF" id="PIRSF001455">
    <property type="entry name" value="DHQ_synth"/>
    <property type="match status" value="1"/>
</dbReference>
<dbReference type="SUPFAM" id="SSF56796">
    <property type="entry name" value="Dehydroquinate synthase-like"/>
    <property type="match status" value="1"/>
</dbReference>
<reference key="1">
    <citation type="journal article" date="2002" name="Nucleic Acids Res.">
        <title>Genome sequence of Shigella flexneri 2a: insights into pathogenicity through comparison with genomes of Escherichia coli K12 and O157.</title>
        <authorList>
            <person name="Jin Q."/>
            <person name="Yuan Z."/>
            <person name="Xu J."/>
            <person name="Wang Y."/>
            <person name="Shen Y."/>
            <person name="Lu W."/>
            <person name="Wang J."/>
            <person name="Liu H."/>
            <person name="Yang J."/>
            <person name="Yang F."/>
            <person name="Zhang X."/>
            <person name="Zhang J."/>
            <person name="Yang G."/>
            <person name="Wu H."/>
            <person name="Qu D."/>
            <person name="Dong J."/>
            <person name="Sun L."/>
            <person name="Xue Y."/>
            <person name="Zhao A."/>
            <person name="Gao Y."/>
            <person name="Zhu J."/>
            <person name="Kan B."/>
            <person name="Ding K."/>
            <person name="Chen S."/>
            <person name="Cheng H."/>
            <person name="Yao Z."/>
            <person name="He B."/>
            <person name="Chen R."/>
            <person name="Ma D."/>
            <person name="Qiang B."/>
            <person name="Wen Y."/>
            <person name="Hou Y."/>
            <person name="Yu J."/>
        </authorList>
    </citation>
    <scope>NUCLEOTIDE SEQUENCE [LARGE SCALE GENOMIC DNA]</scope>
    <source>
        <strain>301 / Serotype 2a</strain>
    </source>
</reference>
<reference key="2">
    <citation type="journal article" date="2003" name="Infect. Immun.">
        <title>Complete genome sequence and comparative genomics of Shigella flexneri serotype 2a strain 2457T.</title>
        <authorList>
            <person name="Wei J."/>
            <person name="Goldberg M.B."/>
            <person name="Burland V."/>
            <person name="Venkatesan M.M."/>
            <person name="Deng W."/>
            <person name="Fournier G."/>
            <person name="Mayhew G.F."/>
            <person name="Plunkett G. III"/>
            <person name="Rose D.J."/>
            <person name="Darling A."/>
            <person name="Mau B."/>
            <person name="Perna N.T."/>
            <person name="Payne S.M."/>
            <person name="Runyen-Janecky L.J."/>
            <person name="Zhou S."/>
            <person name="Schwartz D.C."/>
            <person name="Blattner F.R."/>
        </authorList>
    </citation>
    <scope>NUCLEOTIDE SEQUENCE [LARGE SCALE GENOMIC DNA]</scope>
    <source>
        <strain>ATCC 700930 / 2457T / Serotype 2a</strain>
    </source>
</reference>
<gene>
    <name evidence="1" type="primary">aroB</name>
    <name type="ordered locus">SF3407</name>
    <name type="ordered locus">S4355</name>
</gene>
<name>AROB_SHIFL</name>
<organism>
    <name type="scientific">Shigella flexneri</name>
    <dbReference type="NCBI Taxonomy" id="623"/>
    <lineage>
        <taxon>Bacteria</taxon>
        <taxon>Pseudomonadati</taxon>
        <taxon>Pseudomonadota</taxon>
        <taxon>Gammaproteobacteria</taxon>
        <taxon>Enterobacterales</taxon>
        <taxon>Enterobacteriaceae</taxon>
        <taxon>Shigella</taxon>
    </lineage>
</organism>
<keyword id="KW-0028">Amino-acid biosynthesis</keyword>
<keyword id="KW-0057">Aromatic amino acid biosynthesis</keyword>
<keyword id="KW-0170">Cobalt</keyword>
<keyword id="KW-0963">Cytoplasm</keyword>
<keyword id="KW-0456">Lyase</keyword>
<keyword id="KW-0479">Metal-binding</keyword>
<keyword id="KW-0520">NAD</keyword>
<keyword id="KW-0547">Nucleotide-binding</keyword>
<keyword id="KW-1185">Reference proteome</keyword>
<keyword id="KW-0862">Zinc</keyword>
<sequence length="362" mass="38826">MERIVVTLGERSYPITIASGLFNEPASFLPLKSGEQVMLVTSETLAPLYLDKVRGVLEQAGVNVDSVILPDGEQYKSLAVLDTVFTALLQKPHGRDTTLVALGGGVVGDLTGFAAASYQRGVRFIQVPTTLLSQVDSSVGGKTAVNHPLGKNMIGAFYQPASVVVDLDCLKTLPPRELASGLAEVIKYGIILDGAFFNWLEENLDALLRLDGPAMAYCIRRCCELKAEVVAADERETGLRALLNLGHTFGHAIEAEMGYGNWLHGEAVAAGMVMAARTSERLGQFSSAETQRIITLLTRAGLPVNGPREMSAQAYLPHMLRDKKVLAGEMRLILPLAIGKSKVRSGVSHELVLNAIADCQSA</sequence>
<feature type="chain" id="PRO_0000140778" description="3-dehydroquinate synthase">
    <location>
        <begin position="1"/>
        <end position="362"/>
    </location>
</feature>
<feature type="binding site" evidence="1">
    <location>
        <begin position="71"/>
        <end position="76"/>
    </location>
    <ligand>
        <name>NAD(+)</name>
        <dbReference type="ChEBI" id="CHEBI:57540"/>
    </ligand>
</feature>
<feature type="binding site" evidence="1">
    <location>
        <begin position="105"/>
        <end position="109"/>
    </location>
    <ligand>
        <name>NAD(+)</name>
        <dbReference type="ChEBI" id="CHEBI:57540"/>
    </ligand>
</feature>
<feature type="binding site" evidence="1">
    <location>
        <begin position="129"/>
        <end position="130"/>
    </location>
    <ligand>
        <name>NAD(+)</name>
        <dbReference type="ChEBI" id="CHEBI:57540"/>
    </ligand>
</feature>
<feature type="binding site" evidence="1">
    <location>
        <position position="142"/>
    </location>
    <ligand>
        <name>NAD(+)</name>
        <dbReference type="ChEBI" id="CHEBI:57540"/>
    </ligand>
</feature>
<feature type="binding site" evidence="1">
    <location>
        <position position="151"/>
    </location>
    <ligand>
        <name>NAD(+)</name>
        <dbReference type="ChEBI" id="CHEBI:57540"/>
    </ligand>
</feature>
<feature type="binding site" evidence="1">
    <location>
        <begin position="169"/>
        <end position="172"/>
    </location>
    <ligand>
        <name>NAD(+)</name>
        <dbReference type="ChEBI" id="CHEBI:57540"/>
    </ligand>
</feature>
<feature type="binding site" evidence="1">
    <location>
        <position position="184"/>
    </location>
    <ligand>
        <name>Zn(2+)</name>
        <dbReference type="ChEBI" id="CHEBI:29105"/>
    </ligand>
</feature>
<feature type="binding site" evidence="1">
    <location>
        <position position="247"/>
    </location>
    <ligand>
        <name>Zn(2+)</name>
        <dbReference type="ChEBI" id="CHEBI:29105"/>
    </ligand>
</feature>
<feature type="binding site" evidence="1">
    <location>
        <position position="264"/>
    </location>
    <ligand>
        <name>Zn(2+)</name>
        <dbReference type="ChEBI" id="CHEBI:29105"/>
    </ligand>
</feature>
<feature type="sequence conflict" description="In Ref. 2; AAP19309." evidence="2" ref="2">
    <original>K</original>
    <variation>E</variation>
    <location>
        <position position="342"/>
    </location>
</feature>
<proteinExistence type="inferred from homology"/>
<protein>
    <recommendedName>
        <fullName evidence="1">3-dehydroquinate synthase</fullName>
        <shortName evidence="1">DHQS</shortName>
        <ecNumber evidence="1">4.2.3.4</ecNumber>
    </recommendedName>
</protein>